<protein>
    <recommendedName>
        <fullName>Uncharacterized protein HI_1479</fullName>
    </recommendedName>
</protein>
<feature type="chain" id="PRO_0000078065" description="Uncharacterized protein HI_1479">
    <location>
        <begin position="1"/>
        <end position="90"/>
    </location>
</feature>
<name>Y1479_HAEIN</name>
<gene>
    <name type="ordered locus">HI_1479</name>
</gene>
<dbReference type="EMBL" id="L42023">
    <property type="protein sequence ID" value="AAC23129.1"/>
    <property type="molecule type" value="Genomic_DNA"/>
</dbReference>
<dbReference type="PIR" id="B64031">
    <property type="entry name" value="B64031"/>
</dbReference>
<dbReference type="RefSeq" id="NP_439630.1">
    <property type="nucleotide sequence ID" value="NC_000907.1"/>
</dbReference>
<dbReference type="SMR" id="P44208"/>
<dbReference type="STRING" id="71421.HI_1479"/>
<dbReference type="EnsemblBacteria" id="AAC23129">
    <property type="protein sequence ID" value="AAC23129"/>
    <property type="gene ID" value="HI_1479"/>
</dbReference>
<dbReference type="KEGG" id="hin:HI_1479"/>
<dbReference type="HOGENOM" id="CLU_2436683_0_0_6"/>
<dbReference type="OrthoDB" id="5676324at2"/>
<dbReference type="BioCyc" id="HINF71421:G1GJ1-1504-MONOMER"/>
<dbReference type="Proteomes" id="UP000000579">
    <property type="component" value="Chromosome"/>
</dbReference>
<dbReference type="Gene3D" id="1.10.10.60">
    <property type="entry name" value="Homeodomain-like"/>
    <property type="match status" value="1"/>
</dbReference>
<dbReference type="InterPro" id="IPR009057">
    <property type="entry name" value="Homeodomain-like_sf"/>
</dbReference>
<dbReference type="InterPro" id="IPR015126">
    <property type="entry name" value="Mu_I-gamma"/>
</dbReference>
<dbReference type="Pfam" id="PF09039">
    <property type="entry name" value="HTH_Tnp_Mu_2"/>
    <property type="match status" value="1"/>
</dbReference>
<dbReference type="SUPFAM" id="SSF46689">
    <property type="entry name" value="Homeodomain-like"/>
    <property type="match status" value="1"/>
</dbReference>
<reference key="1">
    <citation type="journal article" date="1995" name="Science">
        <title>Whole-genome random sequencing and assembly of Haemophilus influenzae Rd.</title>
        <authorList>
            <person name="Fleischmann R.D."/>
            <person name="Adams M.D."/>
            <person name="White O."/>
            <person name="Clayton R.A."/>
            <person name="Kirkness E.F."/>
            <person name="Kerlavage A.R."/>
            <person name="Bult C.J."/>
            <person name="Tomb J.-F."/>
            <person name="Dougherty B.A."/>
            <person name="Merrick J.M."/>
            <person name="McKenney K."/>
            <person name="Sutton G.G."/>
            <person name="FitzHugh W."/>
            <person name="Fields C.A."/>
            <person name="Gocayne J.D."/>
            <person name="Scott J.D."/>
            <person name="Shirley R."/>
            <person name="Liu L.-I."/>
            <person name="Glodek A."/>
            <person name="Kelley J.M."/>
            <person name="Weidman J.F."/>
            <person name="Phillips C.A."/>
            <person name="Spriggs T."/>
            <person name="Hedblom E."/>
            <person name="Cotton M.D."/>
            <person name="Utterback T.R."/>
            <person name="Hanna M.C."/>
            <person name="Nguyen D.T."/>
            <person name="Saudek D.M."/>
            <person name="Brandon R.C."/>
            <person name="Fine L.D."/>
            <person name="Fritchman J.L."/>
            <person name="Fuhrmann J.L."/>
            <person name="Geoghagen N.S.M."/>
            <person name="Gnehm C.L."/>
            <person name="McDonald L.A."/>
            <person name="Small K.V."/>
            <person name="Fraser C.M."/>
            <person name="Smith H.O."/>
            <person name="Venter J.C."/>
        </authorList>
    </citation>
    <scope>NUCLEOTIDE SEQUENCE [LARGE SCALE GENOMIC DNA]</scope>
    <source>
        <strain>ATCC 51907 / DSM 11121 / KW20 / Rd</strain>
    </source>
</reference>
<accession>P44208</accession>
<proteinExistence type="predicted"/>
<organism>
    <name type="scientific">Haemophilus influenzae (strain ATCC 51907 / DSM 11121 / KW20 / Rd)</name>
    <dbReference type="NCBI Taxonomy" id="71421"/>
    <lineage>
        <taxon>Bacteria</taxon>
        <taxon>Pseudomonadati</taxon>
        <taxon>Pseudomonadota</taxon>
        <taxon>Gammaproteobacteria</taxon>
        <taxon>Pasteurellales</taxon>
        <taxon>Pasteurellaceae</taxon>
        <taxon>Haemophilus</taxon>
    </lineage>
</organism>
<sequence>MSNITLNENAMLYLKADYYRPEMPTFKACYFRLSKIAQEQGWGTLPNLAQTKALFKAAVPEIIWTREAFKRANTQKKHAHKATPYLEQVM</sequence>
<keyword id="KW-1185">Reference proteome</keyword>